<dbReference type="EC" id="6.5.1.2" evidence="1"/>
<dbReference type="EMBL" id="CP000970">
    <property type="protein sequence ID" value="ACB16342.1"/>
    <property type="molecule type" value="Genomic_DNA"/>
</dbReference>
<dbReference type="RefSeq" id="WP_000443690.1">
    <property type="nucleotide sequence ID" value="NC_010498.1"/>
</dbReference>
<dbReference type="SMR" id="B1LMK5"/>
<dbReference type="KEGG" id="ecm:EcSMS35_2566"/>
<dbReference type="HOGENOM" id="CLU_007764_2_1_6"/>
<dbReference type="Proteomes" id="UP000007011">
    <property type="component" value="Chromosome"/>
</dbReference>
<dbReference type="GO" id="GO:0005829">
    <property type="term" value="C:cytosol"/>
    <property type="evidence" value="ECO:0007669"/>
    <property type="project" value="TreeGrafter"/>
</dbReference>
<dbReference type="GO" id="GO:0003677">
    <property type="term" value="F:DNA binding"/>
    <property type="evidence" value="ECO:0007669"/>
    <property type="project" value="InterPro"/>
</dbReference>
<dbReference type="GO" id="GO:0003911">
    <property type="term" value="F:DNA ligase (NAD+) activity"/>
    <property type="evidence" value="ECO:0007669"/>
    <property type="project" value="UniProtKB-UniRule"/>
</dbReference>
<dbReference type="GO" id="GO:0046872">
    <property type="term" value="F:metal ion binding"/>
    <property type="evidence" value="ECO:0007669"/>
    <property type="project" value="UniProtKB-KW"/>
</dbReference>
<dbReference type="GO" id="GO:0006281">
    <property type="term" value="P:DNA repair"/>
    <property type="evidence" value="ECO:0007669"/>
    <property type="project" value="UniProtKB-KW"/>
</dbReference>
<dbReference type="GO" id="GO:0006260">
    <property type="term" value="P:DNA replication"/>
    <property type="evidence" value="ECO:0007669"/>
    <property type="project" value="UniProtKB-KW"/>
</dbReference>
<dbReference type="CDD" id="cd17748">
    <property type="entry name" value="BRCT_DNA_ligase_like"/>
    <property type="match status" value="1"/>
</dbReference>
<dbReference type="CDD" id="cd00114">
    <property type="entry name" value="LIGANc"/>
    <property type="match status" value="1"/>
</dbReference>
<dbReference type="FunFam" id="1.10.150.20:FF:000006">
    <property type="entry name" value="DNA ligase"/>
    <property type="match status" value="1"/>
</dbReference>
<dbReference type="FunFam" id="1.10.150.20:FF:000007">
    <property type="entry name" value="DNA ligase"/>
    <property type="match status" value="1"/>
</dbReference>
<dbReference type="FunFam" id="1.10.287.610:FF:000002">
    <property type="entry name" value="DNA ligase"/>
    <property type="match status" value="1"/>
</dbReference>
<dbReference type="FunFam" id="2.40.50.140:FF:000012">
    <property type="entry name" value="DNA ligase"/>
    <property type="match status" value="1"/>
</dbReference>
<dbReference type="FunFam" id="3.30.470.30:FF:000001">
    <property type="entry name" value="DNA ligase"/>
    <property type="match status" value="1"/>
</dbReference>
<dbReference type="FunFam" id="3.40.50.10190:FF:000004">
    <property type="entry name" value="DNA ligase"/>
    <property type="match status" value="1"/>
</dbReference>
<dbReference type="FunFam" id="6.20.10.30:FF:000001">
    <property type="entry name" value="DNA ligase"/>
    <property type="match status" value="1"/>
</dbReference>
<dbReference type="Gene3D" id="6.20.10.30">
    <property type="match status" value="1"/>
</dbReference>
<dbReference type="Gene3D" id="1.10.150.20">
    <property type="entry name" value="5' to 3' exonuclease, C-terminal subdomain"/>
    <property type="match status" value="2"/>
</dbReference>
<dbReference type="Gene3D" id="3.40.50.10190">
    <property type="entry name" value="BRCT domain"/>
    <property type="match status" value="1"/>
</dbReference>
<dbReference type="Gene3D" id="3.30.470.30">
    <property type="entry name" value="DNA ligase/mRNA capping enzyme"/>
    <property type="match status" value="1"/>
</dbReference>
<dbReference type="Gene3D" id="1.10.287.610">
    <property type="entry name" value="Helix hairpin bin"/>
    <property type="match status" value="1"/>
</dbReference>
<dbReference type="Gene3D" id="2.40.50.140">
    <property type="entry name" value="Nucleic acid-binding proteins"/>
    <property type="match status" value="1"/>
</dbReference>
<dbReference type="HAMAP" id="MF_01588">
    <property type="entry name" value="DNA_ligase_A"/>
    <property type="match status" value="1"/>
</dbReference>
<dbReference type="InterPro" id="IPR001357">
    <property type="entry name" value="BRCT_dom"/>
</dbReference>
<dbReference type="InterPro" id="IPR036420">
    <property type="entry name" value="BRCT_dom_sf"/>
</dbReference>
<dbReference type="InterPro" id="IPR041663">
    <property type="entry name" value="DisA/LigA_HHH"/>
</dbReference>
<dbReference type="InterPro" id="IPR001679">
    <property type="entry name" value="DNA_ligase"/>
</dbReference>
<dbReference type="InterPro" id="IPR018239">
    <property type="entry name" value="DNA_ligase_AS"/>
</dbReference>
<dbReference type="InterPro" id="IPR033136">
    <property type="entry name" value="DNA_ligase_CS"/>
</dbReference>
<dbReference type="InterPro" id="IPR013839">
    <property type="entry name" value="DNAligase_adenylation"/>
</dbReference>
<dbReference type="InterPro" id="IPR013840">
    <property type="entry name" value="DNAligase_N"/>
</dbReference>
<dbReference type="InterPro" id="IPR003583">
    <property type="entry name" value="Hlx-hairpin-Hlx_DNA-bd_motif"/>
</dbReference>
<dbReference type="InterPro" id="IPR012340">
    <property type="entry name" value="NA-bd_OB-fold"/>
</dbReference>
<dbReference type="InterPro" id="IPR004150">
    <property type="entry name" value="NAD_DNA_ligase_OB"/>
</dbReference>
<dbReference type="InterPro" id="IPR010994">
    <property type="entry name" value="RuvA_2-like"/>
</dbReference>
<dbReference type="InterPro" id="IPR004149">
    <property type="entry name" value="Znf_DNAligase_C4"/>
</dbReference>
<dbReference type="NCBIfam" id="TIGR00575">
    <property type="entry name" value="dnlj"/>
    <property type="match status" value="1"/>
</dbReference>
<dbReference type="NCBIfam" id="NF005932">
    <property type="entry name" value="PRK07956.1"/>
    <property type="match status" value="1"/>
</dbReference>
<dbReference type="PANTHER" id="PTHR23389">
    <property type="entry name" value="CHROMOSOME TRANSMISSION FIDELITY FACTOR 18"/>
    <property type="match status" value="1"/>
</dbReference>
<dbReference type="PANTHER" id="PTHR23389:SF9">
    <property type="entry name" value="DNA LIGASE"/>
    <property type="match status" value="1"/>
</dbReference>
<dbReference type="Pfam" id="PF00533">
    <property type="entry name" value="BRCT"/>
    <property type="match status" value="1"/>
</dbReference>
<dbReference type="Pfam" id="PF01653">
    <property type="entry name" value="DNA_ligase_aden"/>
    <property type="match status" value="1"/>
</dbReference>
<dbReference type="Pfam" id="PF03120">
    <property type="entry name" value="DNA_ligase_OB"/>
    <property type="match status" value="1"/>
</dbReference>
<dbReference type="Pfam" id="PF03119">
    <property type="entry name" value="DNA_ligase_ZBD"/>
    <property type="match status" value="1"/>
</dbReference>
<dbReference type="Pfam" id="PF12826">
    <property type="entry name" value="HHH_2"/>
    <property type="match status" value="1"/>
</dbReference>
<dbReference type="Pfam" id="PF14520">
    <property type="entry name" value="HHH_5"/>
    <property type="match status" value="1"/>
</dbReference>
<dbReference type="Pfam" id="PF22745">
    <property type="entry name" value="Nlig-Ia"/>
    <property type="match status" value="1"/>
</dbReference>
<dbReference type="PIRSF" id="PIRSF001604">
    <property type="entry name" value="LigA"/>
    <property type="match status" value="1"/>
</dbReference>
<dbReference type="SMART" id="SM00292">
    <property type="entry name" value="BRCT"/>
    <property type="match status" value="1"/>
</dbReference>
<dbReference type="SMART" id="SM00278">
    <property type="entry name" value="HhH1"/>
    <property type="match status" value="4"/>
</dbReference>
<dbReference type="SMART" id="SM00532">
    <property type="entry name" value="LIGANc"/>
    <property type="match status" value="1"/>
</dbReference>
<dbReference type="SUPFAM" id="SSF52113">
    <property type="entry name" value="BRCT domain"/>
    <property type="match status" value="1"/>
</dbReference>
<dbReference type="SUPFAM" id="SSF56091">
    <property type="entry name" value="DNA ligase/mRNA capping enzyme, catalytic domain"/>
    <property type="match status" value="1"/>
</dbReference>
<dbReference type="SUPFAM" id="SSF50249">
    <property type="entry name" value="Nucleic acid-binding proteins"/>
    <property type="match status" value="1"/>
</dbReference>
<dbReference type="SUPFAM" id="SSF47781">
    <property type="entry name" value="RuvA domain 2-like"/>
    <property type="match status" value="1"/>
</dbReference>
<dbReference type="PROSITE" id="PS50172">
    <property type="entry name" value="BRCT"/>
    <property type="match status" value="1"/>
</dbReference>
<dbReference type="PROSITE" id="PS01055">
    <property type="entry name" value="DNA_LIGASE_N1"/>
    <property type="match status" value="1"/>
</dbReference>
<dbReference type="PROSITE" id="PS01056">
    <property type="entry name" value="DNA_LIGASE_N2"/>
    <property type="match status" value="1"/>
</dbReference>
<gene>
    <name evidence="1" type="primary">ligA</name>
    <name type="ordered locus">EcSMS35_2566</name>
</gene>
<sequence length="671" mass="73667">MESIEQQLTELRTTLRHHEYLYHVMDAPEIPDAEYDRLMRELRELETKHPELITPDSPTQRVGAAPLAAFSQIRHEVPMLSLDNVFDEESFLAFNKRVQDRLKSNEKVTWCCELKLDGLAVSILYENGVLVSAATRGDGTTGEDITSNVRTIRAIPLKLHGENIPARLEVRGEVFLPQAGFEKINEDARRTGGKVFANPRNAAAGSLRQLDPRITAKRPLTFFCYGVGVLEGGELPDTHLGRLLQFKKWGLPVSDRVTLCESAEEVLAFYHKVEEDRPTLGFDIDGVVIKVNSLAQQEQLGFVARAPRWAVAFKFPAQEQMTFVRDVEFQVGRTGAITPVARLEPVHVAGVLVSNATLHNADEIERLGLRIGDKVVIRRAGDVIPQVVNVVLSERPEDTREVVFPTHCPVCGSDVERVEGEAVARCTGGLICGAQRKESLKHFVSRRAMDVDGMGDKIIDQLVEKEYVHTPADLFKLTAGKLTGLERMGPKSAQNVVNALEKAKETTFARFLYALGIREVGEATAAGLAAYFGTLEALEAASIEELQKVPDVGIVVASHVHNFFAEESNRNVISELLAEGVHWPEPIVINAEEIDSPFAGKTVVLTGSLSQMSRDDAKARLVELGAKVAGSVSKKTDLVIAGEAAGSKLAKAQELGIEVIDETEMLRLLGS</sequence>
<comment type="function">
    <text evidence="1">DNA ligase that catalyzes the formation of phosphodiester linkages between 5'-phosphoryl and 3'-hydroxyl groups in double-stranded DNA using NAD as a coenzyme and as the energy source for the reaction. It is essential for DNA replication and repair of damaged DNA.</text>
</comment>
<comment type="catalytic activity">
    <reaction evidence="1">
        <text>NAD(+) + (deoxyribonucleotide)n-3'-hydroxyl + 5'-phospho-(deoxyribonucleotide)m = (deoxyribonucleotide)n+m + AMP + beta-nicotinamide D-nucleotide.</text>
        <dbReference type="EC" id="6.5.1.2"/>
    </reaction>
</comment>
<comment type="cofactor">
    <cofactor evidence="1">
        <name>Mg(2+)</name>
        <dbReference type="ChEBI" id="CHEBI:18420"/>
    </cofactor>
    <cofactor evidence="1">
        <name>Mn(2+)</name>
        <dbReference type="ChEBI" id="CHEBI:29035"/>
    </cofactor>
</comment>
<comment type="similarity">
    <text evidence="1">Belongs to the NAD-dependent DNA ligase family. LigA subfamily.</text>
</comment>
<reference key="1">
    <citation type="journal article" date="2008" name="J. Bacteriol.">
        <title>Insights into the environmental resistance gene pool from the genome sequence of the multidrug-resistant environmental isolate Escherichia coli SMS-3-5.</title>
        <authorList>
            <person name="Fricke W.F."/>
            <person name="Wright M.S."/>
            <person name="Lindell A.H."/>
            <person name="Harkins D.M."/>
            <person name="Baker-Austin C."/>
            <person name="Ravel J."/>
            <person name="Stepanauskas R."/>
        </authorList>
    </citation>
    <scope>NUCLEOTIDE SEQUENCE [LARGE SCALE GENOMIC DNA]</scope>
    <source>
        <strain>SMS-3-5 / SECEC</strain>
    </source>
</reference>
<accession>B1LMK5</accession>
<name>DNLJ_ECOSM</name>
<proteinExistence type="inferred from homology"/>
<evidence type="ECO:0000255" key="1">
    <source>
        <dbReference type="HAMAP-Rule" id="MF_01588"/>
    </source>
</evidence>
<organism>
    <name type="scientific">Escherichia coli (strain SMS-3-5 / SECEC)</name>
    <dbReference type="NCBI Taxonomy" id="439855"/>
    <lineage>
        <taxon>Bacteria</taxon>
        <taxon>Pseudomonadati</taxon>
        <taxon>Pseudomonadota</taxon>
        <taxon>Gammaproteobacteria</taxon>
        <taxon>Enterobacterales</taxon>
        <taxon>Enterobacteriaceae</taxon>
        <taxon>Escherichia</taxon>
    </lineage>
</organism>
<protein>
    <recommendedName>
        <fullName evidence="1">DNA ligase</fullName>
        <ecNumber evidence="1">6.5.1.2</ecNumber>
    </recommendedName>
    <alternativeName>
        <fullName evidence="1">Polydeoxyribonucleotide synthase [NAD(+)]</fullName>
    </alternativeName>
</protein>
<keyword id="KW-0227">DNA damage</keyword>
<keyword id="KW-0234">DNA repair</keyword>
<keyword id="KW-0235">DNA replication</keyword>
<keyword id="KW-0436">Ligase</keyword>
<keyword id="KW-0460">Magnesium</keyword>
<keyword id="KW-0464">Manganese</keyword>
<keyword id="KW-0479">Metal-binding</keyword>
<keyword id="KW-0520">NAD</keyword>
<keyword id="KW-0862">Zinc</keyword>
<feature type="chain" id="PRO_0000380379" description="DNA ligase">
    <location>
        <begin position="1"/>
        <end position="671"/>
    </location>
</feature>
<feature type="domain" description="BRCT" evidence="1">
    <location>
        <begin position="593"/>
        <end position="671"/>
    </location>
</feature>
<feature type="active site" description="N6-AMP-lysine intermediate" evidence="1">
    <location>
        <position position="115"/>
    </location>
</feature>
<feature type="binding site" evidence="1">
    <location>
        <begin position="32"/>
        <end position="36"/>
    </location>
    <ligand>
        <name>NAD(+)</name>
        <dbReference type="ChEBI" id="CHEBI:57540"/>
    </ligand>
</feature>
<feature type="binding site" evidence="1">
    <location>
        <begin position="81"/>
        <end position="82"/>
    </location>
    <ligand>
        <name>NAD(+)</name>
        <dbReference type="ChEBI" id="CHEBI:57540"/>
    </ligand>
</feature>
<feature type="binding site" evidence="1">
    <location>
        <position position="113"/>
    </location>
    <ligand>
        <name>NAD(+)</name>
        <dbReference type="ChEBI" id="CHEBI:57540"/>
    </ligand>
</feature>
<feature type="binding site" evidence="1">
    <location>
        <position position="136"/>
    </location>
    <ligand>
        <name>NAD(+)</name>
        <dbReference type="ChEBI" id="CHEBI:57540"/>
    </ligand>
</feature>
<feature type="binding site" evidence="1">
    <location>
        <position position="173"/>
    </location>
    <ligand>
        <name>NAD(+)</name>
        <dbReference type="ChEBI" id="CHEBI:57540"/>
    </ligand>
</feature>
<feature type="binding site" evidence="1">
    <location>
        <position position="290"/>
    </location>
    <ligand>
        <name>NAD(+)</name>
        <dbReference type="ChEBI" id="CHEBI:57540"/>
    </ligand>
</feature>
<feature type="binding site" evidence="1">
    <location>
        <position position="314"/>
    </location>
    <ligand>
        <name>NAD(+)</name>
        <dbReference type="ChEBI" id="CHEBI:57540"/>
    </ligand>
</feature>
<feature type="binding site" evidence="1">
    <location>
        <position position="408"/>
    </location>
    <ligand>
        <name>Zn(2+)</name>
        <dbReference type="ChEBI" id="CHEBI:29105"/>
    </ligand>
</feature>
<feature type="binding site" evidence="1">
    <location>
        <position position="411"/>
    </location>
    <ligand>
        <name>Zn(2+)</name>
        <dbReference type="ChEBI" id="CHEBI:29105"/>
    </ligand>
</feature>
<feature type="binding site" evidence="1">
    <location>
        <position position="426"/>
    </location>
    <ligand>
        <name>Zn(2+)</name>
        <dbReference type="ChEBI" id="CHEBI:29105"/>
    </ligand>
</feature>
<feature type="binding site" evidence="1">
    <location>
        <position position="432"/>
    </location>
    <ligand>
        <name>Zn(2+)</name>
        <dbReference type="ChEBI" id="CHEBI:29105"/>
    </ligand>
</feature>